<feature type="chain" id="PRO_1000132781" description="Chorismate synthase">
    <location>
        <begin position="1"/>
        <end position="401"/>
    </location>
</feature>
<feature type="binding site" evidence="1">
    <location>
        <position position="40"/>
    </location>
    <ligand>
        <name>NADP(+)</name>
        <dbReference type="ChEBI" id="CHEBI:58349"/>
    </ligand>
</feature>
<feature type="binding site" evidence="1">
    <location>
        <position position="46"/>
    </location>
    <ligand>
        <name>NADP(+)</name>
        <dbReference type="ChEBI" id="CHEBI:58349"/>
    </ligand>
</feature>
<feature type="binding site" evidence="1">
    <location>
        <begin position="135"/>
        <end position="137"/>
    </location>
    <ligand>
        <name>FMN</name>
        <dbReference type="ChEBI" id="CHEBI:58210"/>
    </ligand>
</feature>
<feature type="binding site" evidence="1">
    <location>
        <begin position="256"/>
        <end position="257"/>
    </location>
    <ligand>
        <name>FMN</name>
        <dbReference type="ChEBI" id="CHEBI:58210"/>
    </ligand>
</feature>
<feature type="binding site" evidence="1">
    <location>
        <position position="300"/>
    </location>
    <ligand>
        <name>FMN</name>
        <dbReference type="ChEBI" id="CHEBI:58210"/>
    </ligand>
</feature>
<feature type="binding site" evidence="1">
    <location>
        <begin position="315"/>
        <end position="319"/>
    </location>
    <ligand>
        <name>FMN</name>
        <dbReference type="ChEBI" id="CHEBI:58210"/>
    </ligand>
</feature>
<feature type="binding site" evidence="1">
    <location>
        <position position="341"/>
    </location>
    <ligand>
        <name>FMN</name>
        <dbReference type="ChEBI" id="CHEBI:58210"/>
    </ligand>
</feature>
<organism>
    <name type="scientific">Mycobacterium bovis (strain BCG / Tokyo 172 / ATCC 35737 / TMC 1019)</name>
    <dbReference type="NCBI Taxonomy" id="561275"/>
    <lineage>
        <taxon>Bacteria</taxon>
        <taxon>Bacillati</taxon>
        <taxon>Actinomycetota</taxon>
        <taxon>Actinomycetes</taxon>
        <taxon>Mycobacteriales</taxon>
        <taxon>Mycobacteriaceae</taxon>
        <taxon>Mycobacterium</taxon>
        <taxon>Mycobacterium tuberculosis complex</taxon>
    </lineage>
</organism>
<name>AROC_MYCBT</name>
<accession>C1AF08</accession>
<protein>
    <recommendedName>
        <fullName evidence="1">Chorismate synthase</fullName>
        <shortName evidence="1">CS</shortName>
        <ecNumber evidence="1">4.2.3.5</ecNumber>
    </recommendedName>
    <alternativeName>
        <fullName evidence="1">5-enolpyruvylshikimate-3-phosphate phospholyase</fullName>
    </alternativeName>
</protein>
<evidence type="ECO:0000255" key="1">
    <source>
        <dbReference type="HAMAP-Rule" id="MF_00300"/>
    </source>
</evidence>
<comment type="function">
    <text evidence="1">Catalyzes the anti-1,4-elimination of the C-3 phosphate and the C-6 proR hydrogen from 5-enolpyruvylshikimate-3-phosphate (EPSP) to yield chorismate, which is the branch point compound that serves as the starting substrate for the three terminal pathways of aromatic amino acid biosynthesis. This reaction introduces a second double bond into the aromatic ring system.</text>
</comment>
<comment type="catalytic activity">
    <reaction evidence="1">
        <text>5-O-(1-carboxyvinyl)-3-phosphoshikimate = chorismate + phosphate</text>
        <dbReference type="Rhea" id="RHEA:21020"/>
        <dbReference type="ChEBI" id="CHEBI:29748"/>
        <dbReference type="ChEBI" id="CHEBI:43474"/>
        <dbReference type="ChEBI" id="CHEBI:57701"/>
        <dbReference type="EC" id="4.2.3.5"/>
    </reaction>
</comment>
<comment type="cofactor">
    <cofactor evidence="1">
        <name>FMNH2</name>
        <dbReference type="ChEBI" id="CHEBI:57618"/>
    </cofactor>
    <text evidence="1">Reduced FMN (FMNH(2)).</text>
</comment>
<comment type="pathway">
    <text evidence="1">Metabolic intermediate biosynthesis; chorismate biosynthesis; chorismate from D-erythrose 4-phosphate and phosphoenolpyruvate: step 7/7.</text>
</comment>
<comment type="subunit">
    <text evidence="1">Homotetramer.</text>
</comment>
<comment type="similarity">
    <text evidence="1">Belongs to the chorismate synthase family.</text>
</comment>
<dbReference type="EC" id="4.2.3.5" evidence="1"/>
<dbReference type="EMBL" id="AP010918">
    <property type="protein sequence ID" value="BAH26837.1"/>
    <property type="molecule type" value="Genomic_DNA"/>
</dbReference>
<dbReference type="RefSeq" id="WP_003413027.1">
    <property type="nucleotide sequence ID" value="NZ_CP014566.1"/>
</dbReference>
<dbReference type="SMR" id="C1AF08"/>
<dbReference type="KEGG" id="mbt:JTY_2556"/>
<dbReference type="HOGENOM" id="CLU_034547_2_0_11"/>
<dbReference type="UniPathway" id="UPA00053">
    <property type="reaction ID" value="UER00090"/>
</dbReference>
<dbReference type="GO" id="GO:0005829">
    <property type="term" value="C:cytosol"/>
    <property type="evidence" value="ECO:0007669"/>
    <property type="project" value="TreeGrafter"/>
</dbReference>
<dbReference type="GO" id="GO:0004107">
    <property type="term" value="F:chorismate synthase activity"/>
    <property type="evidence" value="ECO:0007669"/>
    <property type="project" value="UniProtKB-UniRule"/>
</dbReference>
<dbReference type="GO" id="GO:0010181">
    <property type="term" value="F:FMN binding"/>
    <property type="evidence" value="ECO:0007669"/>
    <property type="project" value="TreeGrafter"/>
</dbReference>
<dbReference type="GO" id="GO:0008652">
    <property type="term" value="P:amino acid biosynthetic process"/>
    <property type="evidence" value="ECO:0007669"/>
    <property type="project" value="UniProtKB-KW"/>
</dbReference>
<dbReference type="GO" id="GO:0009073">
    <property type="term" value="P:aromatic amino acid family biosynthetic process"/>
    <property type="evidence" value="ECO:0007669"/>
    <property type="project" value="UniProtKB-KW"/>
</dbReference>
<dbReference type="GO" id="GO:0009423">
    <property type="term" value="P:chorismate biosynthetic process"/>
    <property type="evidence" value="ECO:0007669"/>
    <property type="project" value="UniProtKB-UniRule"/>
</dbReference>
<dbReference type="CDD" id="cd07304">
    <property type="entry name" value="Chorismate_synthase"/>
    <property type="match status" value="1"/>
</dbReference>
<dbReference type="FunFam" id="3.60.150.10:FF:000002">
    <property type="entry name" value="Chorismate synthase"/>
    <property type="match status" value="1"/>
</dbReference>
<dbReference type="Gene3D" id="3.60.150.10">
    <property type="entry name" value="Chorismate synthase AroC"/>
    <property type="match status" value="1"/>
</dbReference>
<dbReference type="HAMAP" id="MF_00300">
    <property type="entry name" value="Chorismate_synth"/>
    <property type="match status" value="1"/>
</dbReference>
<dbReference type="InterPro" id="IPR000453">
    <property type="entry name" value="Chorismate_synth"/>
</dbReference>
<dbReference type="InterPro" id="IPR035904">
    <property type="entry name" value="Chorismate_synth_AroC_sf"/>
</dbReference>
<dbReference type="InterPro" id="IPR020541">
    <property type="entry name" value="Chorismate_synthase_CS"/>
</dbReference>
<dbReference type="NCBIfam" id="TIGR00033">
    <property type="entry name" value="aroC"/>
    <property type="match status" value="1"/>
</dbReference>
<dbReference type="NCBIfam" id="NF003793">
    <property type="entry name" value="PRK05382.1"/>
    <property type="match status" value="1"/>
</dbReference>
<dbReference type="PANTHER" id="PTHR21085">
    <property type="entry name" value="CHORISMATE SYNTHASE"/>
    <property type="match status" value="1"/>
</dbReference>
<dbReference type="PANTHER" id="PTHR21085:SF0">
    <property type="entry name" value="CHORISMATE SYNTHASE"/>
    <property type="match status" value="1"/>
</dbReference>
<dbReference type="Pfam" id="PF01264">
    <property type="entry name" value="Chorismate_synt"/>
    <property type="match status" value="1"/>
</dbReference>
<dbReference type="PIRSF" id="PIRSF001456">
    <property type="entry name" value="Chorismate_synth"/>
    <property type="match status" value="1"/>
</dbReference>
<dbReference type="SUPFAM" id="SSF103263">
    <property type="entry name" value="Chorismate synthase, AroC"/>
    <property type="match status" value="1"/>
</dbReference>
<dbReference type="PROSITE" id="PS00787">
    <property type="entry name" value="CHORISMATE_SYNTHASE_1"/>
    <property type="match status" value="1"/>
</dbReference>
<dbReference type="PROSITE" id="PS00788">
    <property type="entry name" value="CHORISMATE_SYNTHASE_2"/>
    <property type="match status" value="1"/>
</dbReference>
<dbReference type="PROSITE" id="PS00789">
    <property type="entry name" value="CHORISMATE_SYNTHASE_3"/>
    <property type="match status" value="1"/>
</dbReference>
<sequence>MLRWITAGESHGRALVAVVEGMVAGVHVTSADIADQLARRRLGYGRGARMTFERDAVTVLSGIRHGSTLGGPIAIEIGNTEWPKWETVMAADPVDPAELADVARNAPLTRPRPGHADYAGMLKYGFDDARPVLERASARETAARVAAGTVARAFLRQALGVEVLSHVISIGASAPYEGPPPRAEDLPAIDASPVRAYDKAAEADMIAQIEAAKKDGDTLGGVVEAVALGLPVGLGSFTSGDHRLDSQLAAAVMGIQAIKGVEIGDGFQTARRRGSRAHDEMYPGPDGVVRSTNRAGGLEGGMTNGQPLRVRAAMKPISTVPRALATVDLATGDEAVAIHQRSDVCAVPAAGVVVETMVALVLARAALEKFGGDSLAETQRNIAAYQRSVADREAPAARVSG</sequence>
<keyword id="KW-0028">Amino-acid biosynthesis</keyword>
<keyword id="KW-0057">Aromatic amino acid biosynthesis</keyword>
<keyword id="KW-0274">FAD</keyword>
<keyword id="KW-0285">Flavoprotein</keyword>
<keyword id="KW-0288">FMN</keyword>
<keyword id="KW-0456">Lyase</keyword>
<keyword id="KW-0521">NADP</keyword>
<proteinExistence type="inferred from homology"/>
<reference key="1">
    <citation type="journal article" date="2009" name="Vaccine">
        <title>Whole genome sequence analysis of Mycobacterium bovis bacillus Calmette-Guerin (BCG) Tokyo 172: a comparative study of BCG vaccine substrains.</title>
        <authorList>
            <person name="Seki M."/>
            <person name="Honda I."/>
            <person name="Fujita I."/>
            <person name="Yano I."/>
            <person name="Yamamoto S."/>
            <person name="Koyama A."/>
        </authorList>
    </citation>
    <scope>NUCLEOTIDE SEQUENCE [LARGE SCALE GENOMIC DNA]</scope>
    <source>
        <strain>BCG / Tokyo 172 / ATCC 35737 / TMC 1019</strain>
    </source>
</reference>
<gene>
    <name evidence="1" type="primary">aroC</name>
    <name type="ordered locus">JTY_2556</name>
</gene>